<gene>
    <name evidence="1" type="primary">hslU</name>
    <name type="ordered locus">TDE_1211</name>
</gene>
<feature type="chain" id="PRO_0000160557" description="ATP-dependent protease ATPase subunit HslU">
    <location>
        <begin position="1"/>
        <end position="485"/>
    </location>
</feature>
<feature type="region of interest" description="Disordered" evidence="2">
    <location>
        <begin position="146"/>
        <end position="189"/>
    </location>
</feature>
<feature type="compositionally biased region" description="Polar residues" evidence="2">
    <location>
        <begin position="149"/>
        <end position="177"/>
    </location>
</feature>
<feature type="compositionally biased region" description="Basic and acidic residues" evidence="2">
    <location>
        <begin position="178"/>
        <end position="189"/>
    </location>
</feature>
<feature type="binding site" evidence="1">
    <location>
        <position position="22"/>
    </location>
    <ligand>
        <name>ATP</name>
        <dbReference type="ChEBI" id="CHEBI:30616"/>
    </ligand>
</feature>
<feature type="binding site" evidence="1">
    <location>
        <begin position="64"/>
        <end position="69"/>
    </location>
    <ligand>
        <name>ATP</name>
        <dbReference type="ChEBI" id="CHEBI:30616"/>
    </ligand>
</feature>
<feature type="binding site" evidence="1">
    <location>
        <position position="297"/>
    </location>
    <ligand>
        <name>ATP</name>
        <dbReference type="ChEBI" id="CHEBI:30616"/>
    </ligand>
</feature>
<feature type="binding site" evidence="1">
    <location>
        <position position="363"/>
    </location>
    <ligand>
        <name>ATP</name>
        <dbReference type="ChEBI" id="CHEBI:30616"/>
    </ligand>
</feature>
<feature type="binding site" evidence="1">
    <location>
        <position position="435"/>
    </location>
    <ligand>
        <name>ATP</name>
        <dbReference type="ChEBI" id="CHEBI:30616"/>
    </ligand>
</feature>
<accession>Q73NE3</accession>
<evidence type="ECO:0000255" key="1">
    <source>
        <dbReference type="HAMAP-Rule" id="MF_00249"/>
    </source>
</evidence>
<evidence type="ECO:0000256" key="2">
    <source>
        <dbReference type="SAM" id="MobiDB-lite"/>
    </source>
</evidence>
<proteinExistence type="inferred from homology"/>
<name>HSLU_TREDE</name>
<sequence length="485" mass="54068">MNEELKDLTPKQTVAELDKYIIGQNKAKRAVAIALRNRMRRLKLPEEIRDEIAPKNILMIGPTGVGKTEIARRLAKLSGAPFLKVEATKYTEVGYVGRDVESMIRDLMAVGYTMVKSEMQEKLKEQAEKNTEESLLDLLLPGSNKKKTAATSAQPQDVSQASSGTTISLPSVSSTAQAEEHKAQNENDMSGTREKFRVMLRENKLEDKMVEVTISPSMGTPTFEFFAGGSNMEDIESAMSNISSMLMGGAKSKRKNVSVKEAREIIMAEQLDRMVDHDKVTDEAKQRVEQMGIIFIDEIDKVASRSDRGGGPDVSREGVQRDILPIVEGSKVSTKYGVVDTRHILFIAAGAFSVSKPSDLIPEFQGRFPLRVELEALHAEDFKRILLEPKNALTKQYAELLETEGVKIEFLDEAIDRMSFLAADVNSKNENIGARRLHTIMEMLLEDISFNASEMGGETVKIDVAYVDERLKDIVQDQDLSRYIL</sequence>
<protein>
    <recommendedName>
        <fullName evidence="1">ATP-dependent protease ATPase subunit HslU</fullName>
    </recommendedName>
    <alternativeName>
        <fullName evidence="1">Unfoldase HslU</fullName>
    </alternativeName>
</protein>
<keyword id="KW-0067">ATP-binding</keyword>
<keyword id="KW-0143">Chaperone</keyword>
<keyword id="KW-0963">Cytoplasm</keyword>
<keyword id="KW-0547">Nucleotide-binding</keyword>
<keyword id="KW-1185">Reference proteome</keyword>
<reference key="1">
    <citation type="journal article" date="2004" name="Proc. Natl. Acad. Sci. U.S.A.">
        <title>Comparison of the genome of the oral pathogen Treponema denticola with other spirochete genomes.</title>
        <authorList>
            <person name="Seshadri R."/>
            <person name="Myers G.S.A."/>
            <person name="Tettelin H."/>
            <person name="Eisen J.A."/>
            <person name="Heidelberg J.F."/>
            <person name="Dodson R.J."/>
            <person name="Davidsen T.M."/>
            <person name="DeBoy R.T."/>
            <person name="Fouts D.E."/>
            <person name="Haft D.H."/>
            <person name="Selengut J."/>
            <person name="Ren Q."/>
            <person name="Brinkac L.M."/>
            <person name="Madupu R."/>
            <person name="Kolonay J.F."/>
            <person name="Durkin S.A."/>
            <person name="Daugherty S.C."/>
            <person name="Shetty J."/>
            <person name="Shvartsbeyn A."/>
            <person name="Gebregeorgis E."/>
            <person name="Geer K."/>
            <person name="Tsegaye G."/>
            <person name="Malek J.A."/>
            <person name="Ayodeji B."/>
            <person name="Shatsman S."/>
            <person name="McLeod M.P."/>
            <person name="Smajs D."/>
            <person name="Howell J.K."/>
            <person name="Pal S."/>
            <person name="Amin A."/>
            <person name="Vashisth P."/>
            <person name="McNeill T.Z."/>
            <person name="Xiang Q."/>
            <person name="Sodergren E."/>
            <person name="Baca E."/>
            <person name="Weinstock G.M."/>
            <person name="Norris S.J."/>
            <person name="Fraser C.M."/>
            <person name="Paulsen I.T."/>
        </authorList>
    </citation>
    <scope>NUCLEOTIDE SEQUENCE [LARGE SCALE GENOMIC DNA]</scope>
    <source>
        <strain>ATCC 35405 / DSM 14222 / CIP 103919 / JCM 8153 / KCTC 15104</strain>
    </source>
</reference>
<comment type="function">
    <text evidence="1">ATPase subunit of a proteasome-like degradation complex; this subunit has chaperone activity. The binding of ATP and its subsequent hydrolysis by HslU are essential for unfolding of protein substrates subsequently hydrolyzed by HslV. HslU recognizes the N-terminal part of its protein substrates and unfolds these before they are guided to HslV for hydrolysis.</text>
</comment>
<comment type="subunit">
    <text evidence="1">A double ring-shaped homohexamer of HslV is capped on each side by a ring-shaped HslU homohexamer. The assembly of the HslU/HslV complex is dependent on binding of ATP.</text>
</comment>
<comment type="subcellular location">
    <subcellularLocation>
        <location evidence="1">Cytoplasm</location>
    </subcellularLocation>
</comment>
<comment type="similarity">
    <text evidence="1">Belongs to the ClpX chaperone family. HslU subfamily.</text>
</comment>
<dbReference type="EMBL" id="AE017226">
    <property type="protein sequence ID" value="AAS11729.1"/>
    <property type="molecule type" value="Genomic_DNA"/>
</dbReference>
<dbReference type="RefSeq" id="NP_971818.1">
    <property type="nucleotide sequence ID" value="NC_002967.9"/>
</dbReference>
<dbReference type="RefSeq" id="WP_002677705.1">
    <property type="nucleotide sequence ID" value="NC_002967.9"/>
</dbReference>
<dbReference type="SMR" id="Q73NE3"/>
<dbReference type="STRING" id="243275.TDE_1211"/>
<dbReference type="PaxDb" id="243275-TDE_1211"/>
<dbReference type="GeneID" id="2740105"/>
<dbReference type="KEGG" id="tde:TDE_1211"/>
<dbReference type="PATRIC" id="fig|243275.7.peg.1166"/>
<dbReference type="eggNOG" id="COG1220">
    <property type="taxonomic scope" value="Bacteria"/>
</dbReference>
<dbReference type="HOGENOM" id="CLU_033123_0_0_12"/>
<dbReference type="OrthoDB" id="9804062at2"/>
<dbReference type="Proteomes" id="UP000008212">
    <property type="component" value="Chromosome"/>
</dbReference>
<dbReference type="GO" id="GO:0009376">
    <property type="term" value="C:HslUV protease complex"/>
    <property type="evidence" value="ECO:0007669"/>
    <property type="project" value="UniProtKB-UniRule"/>
</dbReference>
<dbReference type="GO" id="GO:0005524">
    <property type="term" value="F:ATP binding"/>
    <property type="evidence" value="ECO:0007669"/>
    <property type="project" value="UniProtKB-UniRule"/>
</dbReference>
<dbReference type="GO" id="GO:0016887">
    <property type="term" value="F:ATP hydrolysis activity"/>
    <property type="evidence" value="ECO:0007669"/>
    <property type="project" value="InterPro"/>
</dbReference>
<dbReference type="GO" id="GO:0008233">
    <property type="term" value="F:peptidase activity"/>
    <property type="evidence" value="ECO:0007669"/>
    <property type="project" value="InterPro"/>
</dbReference>
<dbReference type="GO" id="GO:0036402">
    <property type="term" value="F:proteasome-activating activity"/>
    <property type="evidence" value="ECO:0007669"/>
    <property type="project" value="UniProtKB-UniRule"/>
</dbReference>
<dbReference type="GO" id="GO:0043335">
    <property type="term" value="P:protein unfolding"/>
    <property type="evidence" value="ECO:0007669"/>
    <property type="project" value="UniProtKB-UniRule"/>
</dbReference>
<dbReference type="GO" id="GO:0051603">
    <property type="term" value="P:proteolysis involved in protein catabolic process"/>
    <property type="evidence" value="ECO:0007669"/>
    <property type="project" value="TreeGrafter"/>
</dbReference>
<dbReference type="CDD" id="cd19498">
    <property type="entry name" value="RecA-like_HslU"/>
    <property type="match status" value="1"/>
</dbReference>
<dbReference type="FunFam" id="3.40.50.300:FF:000220">
    <property type="entry name" value="ATP-dependent protease ATPase subunit HslU"/>
    <property type="match status" value="1"/>
</dbReference>
<dbReference type="Gene3D" id="1.10.8.60">
    <property type="match status" value="1"/>
</dbReference>
<dbReference type="Gene3D" id="3.40.50.300">
    <property type="entry name" value="P-loop containing nucleotide triphosphate hydrolases"/>
    <property type="match status" value="2"/>
</dbReference>
<dbReference type="HAMAP" id="MF_00249">
    <property type="entry name" value="HslU"/>
    <property type="match status" value="1"/>
</dbReference>
<dbReference type="InterPro" id="IPR003593">
    <property type="entry name" value="AAA+_ATPase"/>
</dbReference>
<dbReference type="InterPro" id="IPR050052">
    <property type="entry name" value="ATP-dep_Clp_protease_ClpX"/>
</dbReference>
<dbReference type="InterPro" id="IPR003959">
    <property type="entry name" value="ATPase_AAA_core"/>
</dbReference>
<dbReference type="InterPro" id="IPR019489">
    <property type="entry name" value="Clp_ATPase_C"/>
</dbReference>
<dbReference type="InterPro" id="IPR004491">
    <property type="entry name" value="HslU"/>
</dbReference>
<dbReference type="InterPro" id="IPR027417">
    <property type="entry name" value="P-loop_NTPase"/>
</dbReference>
<dbReference type="NCBIfam" id="TIGR00390">
    <property type="entry name" value="hslU"/>
    <property type="match status" value="1"/>
</dbReference>
<dbReference type="NCBIfam" id="NF003544">
    <property type="entry name" value="PRK05201.1"/>
    <property type="match status" value="1"/>
</dbReference>
<dbReference type="PANTHER" id="PTHR48102">
    <property type="entry name" value="ATP-DEPENDENT CLP PROTEASE ATP-BINDING SUBUNIT CLPX-LIKE, MITOCHONDRIAL-RELATED"/>
    <property type="match status" value="1"/>
</dbReference>
<dbReference type="PANTHER" id="PTHR48102:SF3">
    <property type="entry name" value="ATP-DEPENDENT PROTEASE ATPASE SUBUNIT HSLU"/>
    <property type="match status" value="1"/>
</dbReference>
<dbReference type="Pfam" id="PF00004">
    <property type="entry name" value="AAA"/>
    <property type="match status" value="1"/>
</dbReference>
<dbReference type="Pfam" id="PF07724">
    <property type="entry name" value="AAA_2"/>
    <property type="match status" value="1"/>
</dbReference>
<dbReference type="SMART" id="SM00382">
    <property type="entry name" value="AAA"/>
    <property type="match status" value="1"/>
</dbReference>
<dbReference type="SMART" id="SM01086">
    <property type="entry name" value="ClpB_D2-small"/>
    <property type="match status" value="1"/>
</dbReference>
<dbReference type="SUPFAM" id="SSF52540">
    <property type="entry name" value="P-loop containing nucleoside triphosphate hydrolases"/>
    <property type="match status" value="1"/>
</dbReference>
<organism>
    <name type="scientific">Treponema denticola (strain ATCC 35405 / DSM 14222 / CIP 103919 / JCM 8153 / KCTC 15104)</name>
    <dbReference type="NCBI Taxonomy" id="243275"/>
    <lineage>
        <taxon>Bacteria</taxon>
        <taxon>Pseudomonadati</taxon>
        <taxon>Spirochaetota</taxon>
        <taxon>Spirochaetia</taxon>
        <taxon>Spirochaetales</taxon>
        <taxon>Treponemataceae</taxon>
        <taxon>Treponema</taxon>
    </lineage>
</organism>